<evidence type="ECO:0000255" key="1">
    <source>
        <dbReference type="HAMAP-Rule" id="MF_01658"/>
    </source>
</evidence>
<sequence>MRHYTGIDQLINSFDQALRSLVPGATAAQRQNPAETVEAKLGVEDARHVAGLMRVNHSGEVCAQALYHGQALTAKLPNVRREMQQAAIEEQDHLAWCEDRLKELNSHTSLLNPIWYGLSYGMGALAGIAGDKYSLGFVAETERQVSLHLQDHLNQLPAQDERSRKILEQMNEDELHHRHTALEAGGVELPYAVKITMTAISKLMTKTSYYL</sequence>
<accession>B7H121</accession>
<protein>
    <recommendedName>
        <fullName evidence="1">3-demethoxyubiquinol 3-hydroxylase</fullName>
        <shortName evidence="1">DMQ hydroxylase</shortName>
        <ecNumber evidence="1">1.14.99.60</ecNumber>
    </recommendedName>
    <alternativeName>
        <fullName evidence="1">2-nonaprenyl-3-methyl-6-methoxy-1,4-benzoquinol hydroxylase</fullName>
    </alternativeName>
</protein>
<keyword id="KW-1003">Cell membrane</keyword>
<keyword id="KW-0408">Iron</keyword>
<keyword id="KW-0472">Membrane</keyword>
<keyword id="KW-0479">Metal-binding</keyword>
<keyword id="KW-0503">Monooxygenase</keyword>
<keyword id="KW-0560">Oxidoreductase</keyword>
<keyword id="KW-0831">Ubiquinone biosynthesis</keyword>
<proteinExistence type="inferred from homology"/>
<organism>
    <name type="scientific">Acinetobacter baumannii (strain AB307-0294)</name>
    <dbReference type="NCBI Taxonomy" id="557600"/>
    <lineage>
        <taxon>Bacteria</taxon>
        <taxon>Pseudomonadati</taxon>
        <taxon>Pseudomonadota</taxon>
        <taxon>Gammaproteobacteria</taxon>
        <taxon>Moraxellales</taxon>
        <taxon>Moraxellaceae</taxon>
        <taxon>Acinetobacter</taxon>
        <taxon>Acinetobacter calcoaceticus/baumannii complex</taxon>
    </lineage>
</organism>
<name>COQ7_ACIB3</name>
<feature type="chain" id="PRO_1000187039" description="3-demethoxyubiquinol 3-hydroxylase">
    <location>
        <begin position="1"/>
        <end position="211"/>
    </location>
</feature>
<feature type="binding site" evidence="1">
    <location>
        <position position="60"/>
    </location>
    <ligand>
        <name>Fe cation</name>
        <dbReference type="ChEBI" id="CHEBI:24875"/>
        <label>1</label>
    </ligand>
</feature>
<feature type="binding site" evidence="1">
    <location>
        <position position="90"/>
    </location>
    <ligand>
        <name>Fe cation</name>
        <dbReference type="ChEBI" id="CHEBI:24875"/>
        <label>1</label>
    </ligand>
</feature>
<feature type="binding site" evidence="1">
    <location>
        <position position="90"/>
    </location>
    <ligand>
        <name>Fe cation</name>
        <dbReference type="ChEBI" id="CHEBI:24875"/>
        <label>2</label>
    </ligand>
</feature>
<feature type="binding site" evidence="1">
    <location>
        <position position="93"/>
    </location>
    <ligand>
        <name>Fe cation</name>
        <dbReference type="ChEBI" id="CHEBI:24875"/>
        <label>1</label>
    </ligand>
</feature>
<feature type="binding site" evidence="1">
    <location>
        <position position="142"/>
    </location>
    <ligand>
        <name>Fe cation</name>
        <dbReference type="ChEBI" id="CHEBI:24875"/>
        <label>2</label>
    </ligand>
</feature>
<feature type="binding site" evidence="1">
    <location>
        <position position="174"/>
    </location>
    <ligand>
        <name>Fe cation</name>
        <dbReference type="ChEBI" id="CHEBI:24875"/>
        <label>1</label>
    </ligand>
</feature>
<feature type="binding site" evidence="1">
    <location>
        <position position="174"/>
    </location>
    <ligand>
        <name>Fe cation</name>
        <dbReference type="ChEBI" id="CHEBI:24875"/>
        <label>2</label>
    </ligand>
</feature>
<feature type="binding site" evidence="1">
    <location>
        <position position="177"/>
    </location>
    <ligand>
        <name>Fe cation</name>
        <dbReference type="ChEBI" id="CHEBI:24875"/>
        <label>2</label>
    </ligand>
</feature>
<comment type="function">
    <text evidence="1">Catalyzes the hydroxylation of 2-nonaprenyl-3-methyl-6-methoxy-1,4-benzoquinol during ubiquinone biosynthesis.</text>
</comment>
<comment type="catalytic activity">
    <reaction evidence="1">
        <text>a 5-methoxy-2-methyl-3-(all-trans-polyprenyl)benzene-1,4-diol + AH2 + O2 = a 3-demethylubiquinol + A + H2O</text>
        <dbReference type="Rhea" id="RHEA:50908"/>
        <dbReference type="Rhea" id="RHEA-COMP:10859"/>
        <dbReference type="Rhea" id="RHEA-COMP:10914"/>
        <dbReference type="ChEBI" id="CHEBI:13193"/>
        <dbReference type="ChEBI" id="CHEBI:15377"/>
        <dbReference type="ChEBI" id="CHEBI:15379"/>
        <dbReference type="ChEBI" id="CHEBI:17499"/>
        <dbReference type="ChEBI" id="CHEBI:84167"/>
        <dbReference type="ChEBI" id="CHEBI:84422"/>
        <dbReference type="EC" id="1.14.99.60"/>
    </reaction>
</comment>
<comment type="cofactor">
    <cofactor evidence="1">
        <name>Fe cation</name>
        <dbReference type="ChEBI" id="CHEBI:24875"/>
    </cofactor>
    <text evidence="1">Binds 2 iron ions per subunit.</text>
</comment>
<comment type="pathway">
    <text evidence="1">Cofactor biosynthesis; ubiquinone biosynthesis.</text>
</comment>
<comment type="subcellular location">
    <subcellularLocation>
        <location evidence="1">Cell membrane</location>
        <topology evidence="1">Peripheral membrane protein</topology>
    </subcellularLocation>
</comment>
<comment type="similarity">
    <text evidence="1">Belongs to the COQ7 family.</text>
</comment>
<gene>
    <name evidence="1" type="primary">coq7</name>
    <name type="ordered locus">ABBFA_001332</name>
</gene>
<dbReference type="EC" id="1.14.99.60" evidence="1"/>
<dbReference type="EMBL" id="CP001172">
    <property type="protein sequence ID" value="ACJ58289.1"/>
    <property type="molecule type" value="Genomic_DNA"/>
</dbReference>
<dbReference type="RefSeq" id="WP_001216787.1">
    <property type="nucleotide sequence ID" value="NZ_CP001172.1"/>
</dbReference>
<dbReference type="SMR" id="B7H121"/>
<dbReference type="GeneID" id="92894376"/>
<dbReference type="HOGENOM" id="CLU_088601_0_0_6"/>
<dbReference type="UniPathway" id="UPA00232"/>
<dbReference type="Proteomes" id="UP000006924">
    <property type="component" value="Chromosome"/>
</dbReference>
<dbReference type="GO" id="GO:0005886">
    <property type="term" value="C:plasma membrane"/>
    <property type="evidence" value="ECO:0007669"/>
    <property type="project" value="UniProtKB-SubCell"/>
</dbReference>
<dbReference type="GO" id="GO:0008682">
    <property type="term" value="F:3-demethoxyubiquinol 3-hydroxylase activity"/>
    <property type="evidence" value="ECO:0007669"/>
    <property type="project" value="UniProtKB-EC"/>
</dbReference>
<dbReference type="GO" id="GO:0046872">
    <property type="term" value="F:metal ion binding"/>
    <property type="evidence" value="ECO:0007669"/>
    <property type="project" value="UniProtKB-KW"/>
</dbReference>
<dbReference type="GO" id="GO:0006744">
    <property type="term" value="P:ubiquinone biosynthetic process"/>
    <property type="evidence" value="ECO:0007669"/>
    <property type="project" value="UniProtKB-UniRule"/>
</dbReference>
<dbReference type="CDD" id="cd01042">
    <property type="entry name" value="DMQH"/>
    <property type="match status" value="1"/>
</dbReference>
<dbReference type="Gene3D" id="1.20.1260.10">
    <property type="match status" value="1"/>
</dbReference>
<dbReference type="HAMAP" id="MF_01658">
    <property type="entry name" value="COQ7"/>
    <property type="match status" value="1"/>
</dbReference>
<dbReference type="InterPro" id="IPR047809">
    <property type="entry name" value="COQ7_proteobact"/>
</dbReference>
<dbReference type="InterPro" id="IPR012347">
    <property type="entry name" value="Ferritin-like"/>
</dbReference>
<dbReference type="InterPro" id="IPR009078">
    <property type="entry name" value="Ferritin-like_SF"/>
</dbReference>
<dbReference type="InterPro" id="IPR011566">
    <property type="entry name" value="Ubq_synth_Coq7"/>
</dbReference>
<dbReference type="NCBIfam" id="NF033656">
    <property type="entry name" value="DMQ_monoox_COQ7"/>
    <property type="match status" value="1"/>
</dbReference>
<dbReference type="PANTHER" id="PTHR11237:SF4">
    <property type="entry name" value="5-DEMETHOXYUBIQUINONE HYDROXYLASE, MITOCHONDRIAL"/>
    <property type="match status" value="1"/>
</dbReference>
<dbReference type="PANTHER" id="PTHR11237">
    <property type="entry name" value="COENZYME Q10 BIOSYNTHESIS PROTEIN 7"/>
    <property type="match status" value="1"/>
</dbReference>
<dbReference type="Pfam" id="PF03232">
    <property type="entry name" value="COQ7"/>
    <property type="match status" value="1"/>
</dbReference>
<dbReference type="SUPFAM" id="SSF47240">
    <property type="entry name" value="Ferritin-like"/>
    <property type="match status" value="1"/>
</dbReference>
<reference key="1">
    <citation type="journal article" date="2008" name="J. Bacteriol.">
        <title>Comparative genome sequence analysis of multidrug-resistant Acinetobacter baumannii.</title>
        <authorList>
            <person name="Adams M.D."/>
            <person name="Goglin K."/>
            <person name="Molyneaux N."/>
            <person name="Hujer K.M."/>
            <person name="Lavender H."/>
            <person name="Jamison J.J."/>
            <person name="MacDonald I.J."/>
            <person name="Martin K.M."/>
            <person name="Russo T."/>
            <person name="Campagnari A.A."/>
            <person name="Hujer A.M."/>
            <person name="Bonomo R.A."/>
            <person name="Gill S.R."/>
        </authorList>
    </citation>
    <scope>NUCLEOTIDE SEQUENCE [LARGE SCALE GENOMIC DNA]</scope>
    <source>
        <strain>AB307-0294</strain>
    </source>
</reference>